<protein>
    <recommendedName>
        <fullName evidence="1">Endonuclease MutS2</fullName>
        <ecNumber evidence="1">3.1.-.-</ecNumber>
    </recommendedName>
    <alternativeName>
        <fullName evidence="1">Ribosome-associated protein quality control-upstream factor</fullName>
        <shortName evidence="1">RQC-upstream factor</shortName>
        <shortName evidence="1">RqcU</shortName>
        <ecNumber evidence="1">3.6.4.-</ecNumber>
    </alternativeName>
</protein>
<comment type="function">
    <text evidence="1">Endonuclease that is involved in the suppression of homologous recombination and thus may have a key role in the control of bacterial genetic diversity.</text>
</comment>
<comment type="function">
    <text evidence="1">Acts as a ribosome collision sensor, splitting the ribosome into its 2 subunits. Detects stalled/collided 70S ribosomes which it binds and splits by an ATP-hydrolysis driven conformational change. Acts upstream of the ribosome quality control system (RQC), a ribosome-associated complex that mediates the extraction of incompletely synthesized nascent chains from stalled ribosomes and their subsequent degradation. Probably generates substrates for RQC.</text>
</comment>
<comment type="subunit">
    <text evidence="1">Homodimer. Binds to stalled ribosomes, contacting rRNA.</text>
</comment>
<comment type="similarity">
    <text evidence="1">Belongs to the DNA mismatch repair MutS family. MutS2 subfamily.</text>
</comment>
<proteinExistence type="inferred from homology"/>
<accession>Q2FZD3</accession>
<sequence length="782" mass="88661">MRQKTLDVLEFEKIKSLVANETISDLGLEKVNQMMPATNFETVVFQMEETDEIAQIYNKHRLPSLSGLSKVSAFIHRADIGGVLNVSELNLIKRLIQVQNQFKTFYNQLVEEDEGVKYPILDDKMNQLPVLTDLFQQINETCDTYDLYDNASYELQGIRSKISSTNQRIRQNLDRIVKSQANQKKLSDAIVTVRNERNVIPVKAEYRQDFNGIVHDQSASGQTLYIEPSSVVEMNNQISRLRHDEAIEKERILTQLTGYVAADKDALLVAEQVMGQLDFLIAKARYSRSIKGTKPIFKEDRTVYLPKAYHPLLNRETVVANTIEFMEDIETVIITGPNTGGKTVTLKTLGLIIVMAQSGLLIPTLDGSQLSVFKNVYCDIGDEQSIEQSLSTFSSHMTNIVEILKHADKHSLVLFDELGAGTDPSEGAALAMSILDHVRKIGSLVMATTHYPELKAYSYNREGVMNASVEFDVDTLSPTYKLLMGVPGRSNAFDISKKLGLSLNIINKAKTMIGTDEKEINEMIESLERNYKRVETQRLELDRLVKEAEQVHDDLSKQYQQFQNYEKSLIEEAKEKANQKIKAATKEADDIIKDLRQLREQKGADVKEHELIDKKKRLDDHYEAKSIKQNVQKQKYDKIVAGDEVKVLSYGQKGEVLEIVNDEEAIVQMGIIKMKLPIEDLEKKQKEKVKPTKMVTRQNRQTIKTELDLRGYRYEDALIELDQYLDQAVLSNYEQVYIIHGKGTGALQKGVQQHLKKHKSVSDFRGGMPSEGGFGVTVATLK</sequence>
<organism>
    <name type="scientific">Staphylococcus aureus (strain NCTC 8325 / PS 47)</name>
    <dbReference type="NCBI Taxonomy" id="93061"/>
    <lineage>
        <taxon>Bacteria</taxon>
        <taxon>Bacillati</taxon>
        <taxon>Bacillota</taxon>
        <taxon>Bacilli</taxon>
        <taxon>Bacillales</taxon>
        <taxon>Staphylococcaceae</taxon>
        <taxon>Staphylococcus</taxon>
    </lineage>
</organism>
<gene>
    <name evidence="1" type="primary">mutS2</name>
    <name evidence="1" type="synonym">rqcU</name>
    <name type="ordered locus">SAOUHSC_01099</name>
</gene>
<dbReference type="EC" id="3.1.-.-" evidence="1"/>
<dbReference type="EC" id="3.6.4.-" evidence="1"/>
<dbReference type="EMBL" id="CP000253">
    <property type="protein sequence ID" value="ABD30213.1"/>
    <property type="molecule type" value="Genomic_DNA"/>
</dbReference>
<dbReference type="RefSeq" id="WP_001249285.1">
    <property type="nucleotide sequence ID" value="NZ_LS483365.1"/>
</dbReference>
<dbReference type="RefSeq" id="YP_499643.1">
    <property type="nucleotide sequence ID" value="NC_007795.1"/>
</dbReference>
<dbReference type="SMR" id="Q2FZD3"/>
<dbReference type="STRING" id="93061.SAOUHSC_01099"/>
<dbReference type="PaxDb" id="1280-SAXN108_1139"/>
<dbReference type="GeneID" id="3920741"/>
<dbReference type="KEGG" id="sao:SAOUHSC_01099"/>
<dbReference type="PATRIC" id="fig|93061.5.peg.1007"/>
<dbReference type="eggNOG" id="COG1193">
    <property type="taxonomic scope" value="Bacteria"/>
</dbReference>
<dbReference type="HOGENOM" id="CLU_011252_2_1_9"/>
<dbReference type="OrthoDB" id="9808166at2"/>
<dbReference type="PRO" id="PR:Q2FZD3"/>
<dbReference type="Proteomes" id="UP000008816">
    <property type="component" value="Chromosome"/>
</dbReference>
<dbReference type="GO" id="GO:0005524">
    <property type="term" value="F:ATP binding"/>
    <property type="evidence" value="ECO:0007669"/>
    <property type="project" value="UniProtKB-UniRule"/>
</dbReference>
<dbReference type="GO" id="GO:0016887">
    <property type="term" value="F:ATP hydrolysis activity"/>
    <property type="evidence" value="ECO:0007669"/>
    <property type="project" value="InterPro"/>
</dbReference>
<dbReference type="GO" id="GO:0140664">
    <property type="term" value="F:ATP-dependent DNA damage sensor activity"/>
    <property type="evidence" value="ECO:0007669"/>
    <property type="project" value="InterPro"/>
</dbReference>
<dbReference type="GO" id="GO:0003690">
    <property type="term" value="F:double-stranded DNA binding"/>
    <property type="evidence" value="ECO:0000318"/>
    <property type="project" value="GO_Central"/>
</dbReference>
<dbReference type="GO" id="GO:0004519">
    <property type="term" value="F:endonuclease activity"/>
    <property type="evidence" value="ECO:0007669"/>
    <property type="project" value="UniProtKB-UniRule"/>
</dbReference>
<dbReference type="GO" id="GO:0030983">
    <property type="term" value="F:mismatched DNA binding"/>
    <property type="evidence" value="ECO:0007669"/>
    <property type="project" value="InterPro"/>
</dbReference>
<dbReference type="GO" id="GO:0043023">
    <property type="term" value="F:ribosomal large subunit binding"/>
    <property type="evidence" value="ECO:0007669"/>
    <property type="project" value="UniProtKB-UniRule"/>
</dbReference>
<dbReference type="GO" id="GO:0019843">
    <property type="term" value="F:rRNA binding"/>
    <property type="evidence" value="ECO:0007669"/>
    <property type="project" value="UniProtKB-UniRule"/>
</dbReference>
<dbReference type="GO" id="GO:0006298">
    <property type="term" value="P:mismatch repair"/>
    <property type="evidence" value="ECO:0007669"/>
    <property type="project" value="InterPro"/>
</dbReference>
<dbReference type="GO" id="GO:0045910">
    <property type="term" value="P:negative regulation of DNA recombination"/>
    <property type="evidence" value="ECO:0007669"/>
    <property type="project" value="InterPro"/>
</dbReference>
<dbReference type="GO" id="GO:0072344">
    <property type="term" value="P:rescue of stalled ribosome"/>
    <property type="evidence" value="ECO:0007669"/>
    <property type="project" value="UniProtKB-UniRule"/>
</dbReference>
<dbReference type="CDD" id="cd03280">
    <property type="entry name" value="ABC_MutS2"/>
    <property type="match status" value="1"/>
</dbReference>
<dbReference type="FunFam" id="3.30.1370.110:FF:000006">
    <property type="entry name" value="Endonuclease MutS2"/>
    <property type="match status" value="1"/>
</dbReference>
<dbReference type="FunFam" id="3.40.50.300:FF:000830">
    <property type="entry name" value="Endonuclease MutS2"/>
    <property type="match status" value="1"/>
</dbReference>
<dbReference type="Gene3D" id="3.30.1370.110">
    <property type="match status" value="1"/>
</dbReference>
<dbReference type="Gene3D" id="3.40.50.300">
    <property type="entry name" value="P-loop containing nucleotide triphosphate hydrolases"/>
    <property type="match status" value="1"/>
</dbReference>
<dbReference type="HAMAP" id="MF_00092">
    <property type="entry name" value="MutS2"/>
    <property type="match status" value="1"/>
</dbReference>
<dbReference type="InterPro" id="IPR000432">
    <property type="entry name" value="DNA_mismatch_repair_MutS_C"/>
</dbReference>
<dbReference type="InterPro" id="IPR007696">
    <property type="entry name" value="DNA_mismatch_repair_MutS_core"/>
</dbReference>
<dbReference type="InterPro" id="IPR036187">
    <property type="entry name" value="DNA_mismatch_repair_MutS_sf"/>
</dbReference>
<dbReference type="InterPro" id="IPR046893">
    <property type="entry name" value="MSSS"/>
</dbReference>
<dbReference type="InterPro" id="IPR045076">
    <property type="entry name" value="MutS"/>
</dbReference>
<dbReference type="InterPro" id="IPR005747">
    <property type="entry name" value="MutS2"/>
</dbReference>
<dbReference type="InterPro" id="IPR027417">
    <property type="entry name" value="P-loop_NTPase"/>
</dbReference>
<dbReference type="InterPro" id="IPR002625">
    <property type="entry name" value="Smr_dom"/>
</dbReference>
<dbReference type="InterPro" id="IPR036063">
    <property type="entry name" value="Smr_dom_sf"/>
</dbReference>
<dbReference type="NCBIfam" id="TIGR01069">
    <property type="entry name" value="mutS2"/>
    <property type="match status" value="1"/>
</dbReference>
<dbReference type="PANTHER" id="PTHR48466:SF2">
    <property type="entry name" value="OS10G0509000 PROTEIN"/>
    <property type="match status" value="1"/>
</dbReference>
<dbReference type="PANTHER" id="PTHR48466">
    <property type="entry name" value="OS10G0509000 PROTEIN-RELATED"/>
    <property type="match status" value="1"/>
</dbReference>
<dbReference type="Pfam" id="PF20297">
    <property type="entry name" value="MSSS"/>
    <property type="match status" value="1"/>
</dbReference>
<dbReference type="Pfam" id="PF00488">
    <property type="entry name" value="MutS_V"/>
    <property type="match status" value="1"/>
</dbReference>
<dbReference type="Pfam" id="PF01713">
    <property type="entry name" value="Smr"/>
    <property type="match status" value="1"/>
</dbReference>
<dbReference type="PIRSF" id="PIRSF005814">
    <property type="entry name" value="MutS_YshD"/>
    <property type="match status" value="1"/>
</dbReference>
<dbReference type="SMART" id="SM00534">
    <property type="entry name" value="MUTSac"/>
    <property type="match status" value="1"/>
</dbReference>
<dbReference type="SMART" id="SM00533">
    <property type="entry name" value="MUTSd"/>
    <property type="match status" value="1"/>
</dbReference>
<dbReference type="SMART" id="SM00463">
    <property type="entry name" value="SMR"/>
    <property type="match status" value="1"/>
</dbReference>
<dbReference type="SUPFAM" id="SSF48334">
    <property type="entry name" value="DNA repair protein MutS, domain III"/>
    <property type="match status" value="1"/>
</dbReference>
<dbReference type="SUPFAM" id="SSF52540">
    <property type="entry name" value="P-loop containing nucleoside triphosphate hydrolases"/>
    <property type="match status" value="1"/>
</dbReference>
<dbReference type="SUPFAM" id="SSF160443">
    <property type="entry name" value="SMR domain-like"/>
    <property type="match status" value="1"/>
</dbReference>
<dbReference type="PROSITE" id="PS00486">
    <property type="entry name" value="DNA_MISMATCH_REPAIR_2"/>
    <property type="match status" value="1"/>
</dbReference>
<dbReference type="PROSITE" id="PS50828">
    <property type="entry name" value="SMR"/>
    <property type="match status" value="1"/>
</dbReference>
<name>MUTS2_STAA8</name>
<keyword id="KW-0067">ATP-binding</keyword>
<keyword id="KW-0238">DNA-binding</keyword>
<keyword id="KW-0255">Endonuclease</keyword>
<keyword id="KW-0378">Hydrolase</keyword>
<keyword id="KW-0540">Nuclease</keyword>
<keyword id="KW-0547">Nucleotide-binding</keyword>
<keyword id="KW-1185">Reference proteome</keyword>
<keyword id="KW-0694">RNA-binding</keyword>
<keyword id="KW-0699">rRNA-binding</keyword>
<feature type="chain" id="PRO_1000093380" description="Endonuclease MutS2">
    <location>
        <begin position="1"/>
        <end position="782"/>
    </location>
</feature>
<feature type="domain" description="Smr" evidence="1">
    <location>
        <begin position="707"/>
        <end position="782"/>
    </location>
</feature>
<feature type="binding site" evidence="1">
    <location>
        <begin position="336"/>
        <end position="343"/>
    </location>
    <ligand>
        <name>ATP</name>
        <dbReference type="ChEBI" id="CHEBI:30616"/>
    </ligand>
</feature>
<evidence type="ECO:0000255" key="1">
    <source>
        <dbReference type="HAMAP-Rule" id="MF_00092"/>
    </source>
</evidence>
<reference key="1">
    <citation type="book" date="2006" name="Gram positive pathogens, 2nd edition">
        <title>The Staphylococcus aureus NCTC 8325 genome.</title>
        <editorList>
            <person name="Fischetti V."/>
            <person name="Novick R."/>
            <person name="Ferretti J."/>
            <person name="Portnoy D."/>
            <person name="Rood J."/>
        </editorList>
        <authorList>
            <person name="Gillaspy A.F."/>
            <person name="Worrell V."/>
            <person name="Orvis J."/>
            <person name="Roe B.A."/>
            <person name="Dyer D.W."/>
            <person name="Iandolo J.J."/>
        </authorList>
    </citation>
    <scope>NUCLEOTIDE SEQUENCE [LARGE SCALE GENOMIC DNA]</scope>
    <source>
        <strain>NCTC 8325 / PS 47</strain>
    </source>
</reference>